<organism>
    <name type="scientific">Sodalis glossinidius (strain morsitans)</name>
    <dbReference type="NCBI Taxonomy" id="343509"/>
    <lineage>
        <taxon>Bacteria</taxon>
        <taxon>Pseudomonadati</taxon>
        <taxon>Pseudomonadota</taxon>
        <taxon>Gammaproteobacteria</taxon>
        <taxon>Enterobacterales</taxon>
        <taxon>Bruguierivoracaceae</taxon>
        <taxon>Sodalis</taxon>
    </lineage>
</organism>
<reference key="1">
    <citation type="journal article" date="2006" name="Genome Res.">
        <title>Massive genome erosion and functional adaptations provide insights into the symbiotic lifestyle of Sodalis glossinidius in the tsetse host.</title>
        <authorList>
            <person name="Toh H."/>
            <person name="Weiss B.L."/>
            <person name="Perkin S.A.H."/>
            <person name="Yamashita A."/>
            <person name="Oshima K."/>
            <person name="Hattori M."/>
            <person name="Aksoy S."/>
        </authorList>
    </citation>
    <scope>NUCLEOTIDE SEQUENCE [LARGE SCALE GENOMIC DNA]</scope>
    <source>
        <strain>morsitans</strain>
    </source>
</reference>
<proteinExistence type="inferred from homology"/>
<gene>
    <name evidence="1" type="primary">pgk</name>
    <name type="ordered locus">SG2015</name>
</gene>
<name>PGK_SODGM</name>
<comment type="catalytic activity">
    <reaction evidence="1">
        <text>(2R)-3-phosphoglycerate + ATP = (2R)-3-phospho-glyceroyl phosphate + ADP</text>
        <dbReference type="Rhea" id="RHEA:14801"/>
        <dbReference type="ChEBI" id="CHEBI:30616"/>
        <dbReference type="ChEBI" id="CHEBI:57604"/>
        <dbReference type="ChEBI" id="CHEBI:58272"/>
        <dbReference type="ChEBI" id="CHEBI:456216"/>
        <dbReference type="EC" id="2.7.2.3"/>
    </reaction>
</comment>
<comment type="pathway">
    <text evidence="1">Carbohydrate degradation; glycolysis; pyruvate from D-glyceraldehyde 3-phosphate: step 2/5.</text>
</comment>
<comment type="subunit">
    <text evidence="1">Monomer.</text>
</comment>
<comment type="subcellular location">
    <subcellularLocation>
        <location evidence="1">Cytoplasm</location>
    </subcellularLocation>
</comment>
<comment type="similarity">
    <text evidence="1">Belongs to the phosphoglycerate kinase family.</text>
</comment>
<accession>Q2NRD5</accession>
<evidence type="ECO:0000255" key="1">
    <source>
        <dbReference type="HAMAP-Rule" id="MF_00145"/>
    </source>
</evidence>
<sequence>MAVIKMTDLDLAGKRVFIRSDLNVPVKDGKVTSDARIRASLPTIEDSLKQGARVMVTSHLGRPTEGEYNAEFSLQPVVDYLENKLSAPVRLAKDYLDGVDVAEGELVVLENVRFNKGEKKDDEALAKKYAALCDVFVMDAFGTAHRAQASTHGVGKFAAVACAGPLLFNELEALGKALDNPARPMVAIVGGSKVSTKLTVLDSLSKIADQLIVGGGIANTFVAAQGHNVGKSLYEADLISEAKRLLESSDIPVPTDVRVATEFSETATATLKSTSEIQDSEQILDLGDVSVARLAEILKNAKTILWNGPVGVFEFANFRKGTEVVARAIADSEAFSIAGGGDTLAAIDLFGIADQISYISTGGGAFLEFVEGKKLPAVVMLEERAKQ</sequence>
<keyword id="KW-0067">ATP-binding</keyword>
<keyword id="KW-0963">Cytoplasm</keyword>
<keyword id="KW-0324">Glycolysis</keyword>
<keyword id="KW-0418">Kinase</keyword>
<keyword id="KW-0547">Nucleotide-binding</keyword>
<keyword id="KW-0808">Transferase</keyword>
<protein>
    <recommendedName>
        <fullName evidence="1">Phosphoglycerate kinase</fullName>
        <ecNumber evidence="1">2.7.2.3</ecNumber>
    </recommendedName>
</protein>
<dbReference type="EC" id="2.7.2.3" evidence="1"/>
<dbReference type="EMBL" id="AP008232">
    <property type="protein sequence ID" value="BAE75290.1"/>
    <property type="molecule type" value="Genomic_DNA"/>
</dbReference>
<dbReference type="RefSeq" id="WP_011411745.1">
    <property type="nucleotide sequence ID" value="NC_007712.1"/>
</dbReference>
<dbReference type="SMR" id="Q2NRD5"/>
<dbReference type="STRING" id="343509.SG2015"/>
<dbReference type="KEGG" id="sgl:SG2015"/>
<dbReference type="eggNOG" id="COG0126">
    <property type="taxonomic scope" value="Bacteria"/>
</dbReference>
<dbReference type="HOGENOM" id="CLU_025427_0_2_6"/>
<dbReference type="OrthoDB" id="9808460at2"/>
<dbReference type="UniPathway" id="UPA00109">
    <property type="reaction ID" value="UER00185"/>
</dbReference>
<dbReference type="Proteomes" id="UP000001932">
    <property type="component" value="Chromosome"/>
</dbReference>
<dbReference type="GO" id="GO:0005829">
    <property type="term" value="C:cytosol"/>
    <property type="evidence" value="ECO:0007669"/>
    <property type="project" value="TreeGrafter"/>
</dbReference>
<dbReference type="GO" id="GO:0043531">
    <property type="term" value="F:ADP binding"/>
    <property type="evidence" value="ECO:0007669"/>
    <property type="project" value="TreeGrafter"/>
</dbReference>
<dbReference type="GO" id="GO:0005524">
    <property type="term" value="F:ATP binding"/>
    <property type="evidence" value="ECO:0007669"/>
    <property type="project" value="UniProtKB-KW"/>
</dbReference>
<dbReference type="GO" id="GO:0004618">
    <property type="term" value="F:phosphoglycerate kinase activity"/>
    <property type="evidence" value="ECO:0007669"/>
    <property type="project" value="UniProtKB-UniRule"/>
</dbReference>
<dbReference type="GO" id="GO:0006094">
    <property type="term" value="P:gluconeogenesis"/>
    <property type="evidence" value="ECO:0007669"/>
    <property type="project" value="TreeGrafter"/>
</dbReference>
<dbReference type="GO" id="GO:0006096">
    <property type="term" value="P:glycolytic process"/>
    <property type="evidence" value="ECO:0007669"/>
    <property type="project" value="UniProtKB-UniRule"/>
</dbReference>
<dbReference type="FunFam" id="3.40.50.1260:FF:000001">
    <property type="entry name" value="Phosphoglycerate kinase"/>
    <property type="match status" value="1"/>
</dbReference>
<dbReference type="FunFam" id="3.40.50.1260:FF:000002">
    <property type="entry name" value="Phosphoglycerate kinase"/>
    <property type="match status" value="1"/>
</dbReference>
<dbReference type="Gene3D" id="3.40.50.1260">
    <property type="entry name" value="Phosphoglycerate kinase, N-terminal domain"/>
    <property type="match status" value="2"/>
</dbReference>
<dbReference type="HAMAP" id="MF_00145">
    <property type="entry name" value="Phosphoglyc_kinase"/>
    <property type="match status" value="1"/>
</dbReference>
<dbReference type="InterPro" id="IPR001576">
    <property type="entry name" value="Phosphoglycerate_kinase"/>
</dbReference>
<dbReference type="InterPro" id="IPR015911">
    <property type="entry name" value="Phosphoglycerate_kinase_CS"/>
</dbReference>
<dbReference type="InterPro" id="IPR015824">
    <property type="entry name" value="Phosphoglycerate_kinase_N"/>
</dbReference>
<dbReference type="InterPro" id="IPR036043">
    <property type="entry name" value="Phosphoglycerate_kinase_sf"/>
</dbReference>
<dbReference type="PANTHER" id="PTHR11406">
    <property type="entry name" value="PHOSPHOGLYCERATE KINASE"/>
    <property type="match status" value="1"/>
</dbReference>
<dbReference type="PANTHER" id="PTHR11406:SF23">
    <property type="entry name" value="PHOSPHOGLYCERATE KINASE 1, CHLOROPLASTIC-RELATED"/>
    <property type="match status" value="1"/>
</dbReference>
<dbReference type="Pfam" id="PF00162">
    <property type="entry name" value="PGK"/>
    <property type="match status" value="1"/>
</dbReference>
<dbReference type="PIRSF" id="PIRSF000724">
    <property type="entry name" value="Pgk"/>
    <property type="match status" value="1"/>
</dbReference>
<dbReference type="PRINTS" id="PR00477">
    <property type="entry name" value="PHGLYCKINASE"/>
</dbReference>
<dbReference type="SUPFAM" id="SSF53748">
    <property type="entry name" value="Phosphoglycerate kinase"/>
    <property type="match status" value="1"/>
</dbReference>
<dbReference type="PROSITE" id="PS00111">
    <property type="entry name" value="PGLYCERATE_KINASE"/>
    <property type="match status" value="1"/>
</dbReference>
<feature type="chain" id="PRO_1000058071" description="Phosphoglycerate kinase">
    <location>
        <begin position="1"/>
        <end position="387"/>
    </location>
</feature>
<feature type="binding site" evidence="1">
    <location>
        <begin position="21"/>
        <end position="23"/>
    </location>
    <ligand>
        <name>substrate</name>
    </ligand>
</feature>
<feature type="binding site" evidence="1">
    <location>
        <position position="36"/>
    </location>
    <ligand>
        <name>substrate</name>
    </ligand>
</feature>
<feature type="binding site" evidence="1">
    <location>
        <begin position="59"/>
        <end position="62"/>
    </location>
    <ligand>
        <name>substrate</name>
    </ligand>
</feature>
<feature type="binding site" evidence="1">
    <location>
        <position position="113"/>
    </location>
    <ligand>
        <name>substrate</name>
    </ligand>
</feature>
<feature type="binding site" evidence="1">
    <location>
        <position position="146"/>
    </location>
    <ligand>
        <name>substrate</name>
    </ligand>
</feature>
<feature type="binding site" evidence="1">
    <location>
        <position position="197"/>
    </location>
    <ligand>
        <name>ATP</name>
        <dbReference type="ChEBI" id="CHEBI:30616"/>
    </ligand>
</feature>
<feature type="binding site" evidence="1">
    <location>
        <position position="314"/>
    </location>
    <ligand>
        <name>ATP</name>
        <dbReference type="ChEBI" id="CHEBI:30616"/>
    </ligand>
</feature>
<feature type="binding site" evidence="1">
    <location>
        <begin position="340"/>
        <end position="343"/>
    </location>
    <ligand>
        <name>ATP</name>
        <dbReference type="ChEBI" id="CHEBI:30616"/>
    </ligand>
</feature>